<proteinExistence type="inferred from homology"/>
<feature type="chain" id="PRO_1000083986" description="Undecaprenyl-diphosphatase">
    <location>
        <begin position="1"/>
        <end position="273"/>
    </location>
</feature>
<feature type="transmembrane region" description="Helical" evidence="1">
    <location>
        <begin position="6"/>
        <end position="26"/>
    </location>
</feature>
<feature type="transmembrane region" description="Helical" evidence="1">
    <location>
        <begin position="45"/>
        <end position="65"/>
    </location>
</feature>
<feature type="transmembrane region" description="Helical" evidence="1">
    <location>
        <begin position="90"/>
        <end position="110"/>
    </location>
</feature>
<feature type="transmembrane region" description="Helical" evidence="1">
    <location>
        <begin position="116"/>
        <end position="136"/>
    </location>
</feature>
<feature type="transmembrane region" description="Helical" evidence="1">
    <location>
        <begin position="190"/>
        <end position="210"/>
    </location>
</feature>
<feature type="transmembrane region" description="Helical" evidence="1">
    <location>
        <begin position="222"/>
        <end position="242"/>
    </location>
</feature>
<feature type="transmembrane region" description="Helical" evidence="1">
    <location>
        <begin position="252"/>
        <end position="272"/>
    </location>
</feature>
<name>UPPP_SALAR</name>
<evidence type="ECO:0000255" key="1">
    <source>
        <dbReference type="HAMAP-Rule" id="MF_01006"/>
    </source>
</evidence>
<sequence>MSDMHSLLIAAILGVVEGLTEFLPVSSTGHMIIVGHLLGFEGDTAKTFEVVIQLGSILAVVVMFWRRLFGLIGIHFGRPLQREGESKGQLTLIHILLGMIPAMVLGLVFHDTIKSLFNPINVMYALVVGGLLLIAAECLKPKEPRAPGLDDMTYRQAFMIGCFQCLALWPGFSRSGATISGGMLMGVSRYAASEFSFLLAVPMMMGATVLDLYKSWSFLSAADIPMFAVGFVTAFVVALIAIKTFLQLIKRISFIPFAIYRFVVAAAVYVVFF</sequence>
<accession>A9MPV8</accession>
<organism>
    <name type="scientific">Salmonella arizonae (strain ATCC BAA-731 / CDC346-86 / RSK2980)</name>
    <dbReference type="NCBI Taxonomy" id="41514"/>
    <lineage>
        <taxon>Bacteria</taxon>
        <taxon>Pseudomonadati</taxon>
        <taxon>Pseudomonadota</taxon>
        <taxon>Gammaproteobacteria</taxon>
        <taxon>Enterobacterales</taxon>
        <taxon>Enterobacteriaceae</taxon>
        <taxon>Salmonella</taxon>
    </lineage>
</organism>
<comment type="function">
    <text evidence="1">Catalyzes the dephosphorylation of undecaprenyl diphosphate (UPP). Confers resistance to bacitracin.</text>
</comment>
<comment type="catalytic activity">
    <reaction evidence="1">
        <text>di-trans,octa-cis-undecaprenyl diphosphate + H2O = di-trans,octa-cis-undecaprenyl phosphate + phosphate + H(+)</text>
        <dbReference type="Rhea" id="RHEA:28094"/>
        <dbReference type="ChEBI" id="CHEBI:15377"/>
        <dbReference type="ChEBI" id="CHEBI:15378"/>
        <dbReference type="ChEBI" id="CHEBI:43474"/>
        <dbReference type="ChEBI" id="CHEBI:58405"/>
        <dbReference type="ChEBI" id="CHEBI:60392"/>
        <dbReference type="EC" id="3.6.1.27"/>
    </reaction>
</comment>
<comment type="subcellular location">
    <subcellularLocation>
        <location evidence="1">Cell inner membrane</location>
        <topology evidence="1">Multi-pass membrane protein</topology>
    </subcellularLocation>
</comment>
<comment type="miscellaneous">
    <text>Bacitracin is thought to be involved in the inhibition of peptidoglycan synthesis by sequestering undecaprenyl diphosphate, thereby reducing the pool of lipid carrier available.</text>
</comment>
<comment type="similarity">
    <text evidence="1">Belongs to the UppP family.</text>
</comment>
<keyword id="KW-0046">Antibiotic resistance</keyword>
<keyword id="KW-0997">Cell inner membrane</keyword>
<keyword id="KW-1003">Cell membrane</keyword>
<keyword id="KW-0133">Cell shape</keyword>
<keyword id="KW-0961">Cell wall biogenesis/degradation</keyword>
<keyword id="KW-0378">Hydrolase</keyword>
<keyword id="KW-0472">Membrane</keyword>
<keyword id="KW-0573">Peptidoglycan synthesis</keyword>
<keyword id="KW-1185">Reference proteome</keyword>
<keyword id="KW-0812">Transmembrane</keyword>
<keyword id="KW-1133">Transmembrane helix</keyword>
<gene>
    <name evidence="1" type="primary">uppP</name>
    <name type="ordered locus">SARI_04424</name>
</gene>
<reference key="1">
    <citation type="submission" date="2007-11" db="EMBL/GenBank/DDBJ databases">
        <authorList>
            <consortium name="The Salmonella enterica serovar Arizonae Genome Sequencing Project"/>
            <person name="McClelland M."/>
            <person name="Sanderson E.K."/>
            <person name="Porwollik S."/>
            <person name="Spieth J."/>
            <person name="Clifton W.S."/>
            <person name="Fulton R."/>
            <person name="Chunyan W."/>
            <person name="Wollam A."/>
            <person name="Shah N."/>
            <person name="Pepin K."/>
            <person name="Bhonagiri V."/>
            <person name="Nash W."/>
            <person name="Johnson M."/>
            <person name="Thiruvilangam P."/>
            <person name="Wilson R."/>
        </authorList>
    </citation>
    <scope>NUCLEOTIDE SEQUENCE [LARGE SCALE GENOMIC DNA]</scope>
    <source>
        <strain>ATCC BAA-731 / CDC346-86 / RSK2980</strain>
    </source>
</reference>
<protein>
    <recommendedName>
        <fullName evidence="1">Undecaprenyl-diphosphatase</fullName>
        <ecNumber evidence="1">3.6.1.27</ecNumber>
    </recommendedName>
    <alternativeName>
        <fullName evidence="1">Bacitracin resistance protein</fullName>
    </alternativeName>
    <alternativeName>
        <fullName evidence="1">Undecaprenyl pyrophosphate phosphatase</fullName>
    </alternativeName>
</protein>
<dbReference type="EC" id="3.6.1.27" evidence="1"/>
<dbReference type="EMBL" id="CP000880">
    <property type="protein sequence ID" value="ABX24201.1"/>
    <property type="molecule type" value="Genomic_DNA"/>
</dbReference>
<dbReference type="SMR" id="A9MPV8"/>
<dbReference type="STRING" id="41514.SARI_04424"/>
<dbReference type="KEGG" id="ses:SARI_04424"/>
<dbReference type="HOGENOM" id="CLU_060296_2_0_6"/>
<dbReference type="Proteomes" id="UP000002084">
    <property type="component" value="Chromosome"/>
</dbReference>
<dbReference type="GO" id="GO:0005886">
    <property type="term" value="C:plasma membrane"/>
    <property type="evidence" value="ECO:0007669"/>
    <property type="project" value="UniProtKB-SubCell"/>
</dbReference>
<dbReference type="GO" id="GO:0050380">
    <property type="term" value="F:undecaprenyl-diphosphatase activity"/>
    <property type="evidence" value="ECO:0007669"/>
    <property type="project" value="UniProtKB-UniRule"/>
</dbReference>
<dbReference type="GO" id="GO:0071555">
    <property type="term" value="P:cell wall organization"/>
    <property type="evidence" value="ECO:0007669"/>
    <property type="project" value="UniProtKB-KW"/>
</dbReference>
<dbReference type="GO" id="GO:0009252">
    <property type="term" value="P:peptidoglycan biosynthetic process"/>
    <property type="evidence" value="ECO:0007669"/>
    <property type="project" value="UniProtKB-KW"/>
</dbReference>
<dbReference type="GO" id="GO:0008360">
    <property type="term" value="P:regulation of cell shape"/>
    <property type="evidence" value="ECO:0007669"/>
    <property type="project" value="UniProtKB-KW"/>
</dbReference>
<dbReference type="GO" id="GO:0046677">
    <property type="term" value="P:response to antibiotic"/>
    <property type="evidence" value="ECO:0007669"/>
    <property type="project" value="UniProtKB-UniRule"/>
</dbReference>
<dbReference type="HAMAP" id="MF_01006">
    <property type="entry name" value="Undec_diphosphatase"/>
    <property type="match status" value="1"/>
</dbReference>
<dbReference type="InterPro" id="IPR003824">
    <property type="entry name" value="UppP"/>
</dbReference>
<dbReference type="NCBIfam" id="NF001388">
    <property type="entry name" value="PRK00281.1-1"/>
    <property type="match status" value="1"/>
</dbReference>
<dbReference type="NCBIfam" id="NF001389">
    <property type="entry name" value="PRK00281.1-2"/>
    <property type="match status" value="1"/>
</dbReference>
<dbReference type="NCBIfam" id="NF001390">
    <property type="entry name" value="PRK00281.1-4"/>
    <property type="match status" value="1"/>
</dbReference>
<dbReference type="NCBIfam" id="TIGR00753">
    <property type="entry name" value="undec_PP_bacA"/>
    <property type="match status" value="1"/>
</dbReference>
<dbReference type="PANTHER" id="PTHR30622">
    <property type="entry name" value="UNDECAPRENYL-DIPHOSPHATASE"/>
    <property type="match status" value="1"/>
</dbReference>
<dbReference type="PANTHER" id="PTHR30622:SF3">
    <property type="entry name" value="UNDECAPRENYL-DIPHOSPHATASE"/>
    <property type="match status" value="1"/>
</dbReference>
<dbReference type="Pfam" id="PF02673">
    <property type="entry name" value="BacA"/>
    <property type="match status" value="1"/>
</dbReference>